<feature type="chain" id="PRO_0000229973" description="Tetraacyldisaccharide 4'-kinase">
    <location>
        <begin position="1"/>
        <end position="385"/>
    </location>
</feature>
<feature type="binding site" evidence="1">
    <location>
        <begin position="60"/>
        <end position="67"/>
    </location>
    <ligand>
        <name>ATP</name>
        <dbReference type="ChEBI" id="CHEBI:30616"/>
    </ligand>
</feature>
<organism>
    <name type="scientific">Psychrobacter arcticus (strain DSM 17307 / VKM B-2377 / 273-4)</name>
    <dbReference type="NCBI Taxonomy" id="259536"/>
    <lineage>
        <taxon>Bacteria</taxon>
        <taxon>Pseudomonadati</taxon>
        <taxon>Pseudomonadota</taxon>
        <taxon>Gammaproteobacteria</taxon>
        <taxon>Moraxellales</taxon>
        <taxon>Moraxellaceae</taxon>
        <taxon>Psychrobacter</taxon>
    </lineage>
</organism>
<proteinExistence type="inferred from homology"/>
<sequence>MNIETTITRAWQRQAAWLWLLLPVSWLYSLLMILRRQAYKAGIFSSYRAPIPVMVIGNITVGGSGKTPLIIALVRHLQQQGIKVGVISRGYGGDSSQMPALVNTESVPNIVGDEPCLIVNMTGVAMAVCPNRQQAMTTLLASYPDLQLIIADDGLQHYALQRDIEWIVVDAARGFGNKQLLPTGFLREPMSRLKGANVVYHQKADSLSSTDDKYDDTCPPTKRLRMHLQPDNLERLWSFDTQSDGLATVKAMAPEKGSRVHAVSGIGYPQRFFDTLDTLGFQVSPHPYPDHHDFSLTELLRYTEHPIIVTSKDAVKIRALLMQETINQTNQTNQTLSDEYNELGSRLWVLPVTAVLSDGCYEILQQQLQTLNIAISSKEHERVIT</sequence>
<dbReference type="EC" id="2.7.1.130" evidence="1"/>
<dbReference type="EMBL" id="CP000082">
    <property type="protein sequence ID" value="AAZ19165.1"/>
    <property type="molecule type" value="Genomic_DNA"/>
</dbReference>
<dbReference type="RefSeq" id="WP_011280587.1">
    <property type="nucleotide sequence ID" value="NC_007204.1"/>
</dbReference>
<dbReference type="SMR" id="Q4FS43"/>
<dbReference type="STRING" id="259536.Psyc_1315"/>
<dbReference type="KEGG" id="par:Psyc_1315"/>
<dbReference type="eggNOG" id="COG1663">
    <property type="taxonomic scope" value="Bacteria"/>
</dbReference>
<dbReference type="HOGENOM" id="CLU_038816_2_0_6"/>
<dbReference type="OrthoDB" id="9766423at2"/>
<dbReference type="UniPathway" id="UPA00359">
    <property type="reaction ID" value="UER00482"/>
</dbReference>
<dbReference type="Proteomes" id="UP000000546">
    <property type="component" value="Chromosome"/>
</dbReference>
<dbReference type="GO" id="GO:0005886">
    <property type="term" value="C:plasma membrane"/>
    <property type="evidence" value="ECO:0007669"/>
    <property type="project" value="TreeGrafter"/>
</dbReference>
<dbReference type="GO" id="GO:0005524">
    <property type="term" value="F:ATP binding"/>
    <property type="evidence" value="ECO:0007669"/>
    <property type="project" value="UniProtKB-UniRule"/>
</dbReference>
<dbReference type="GO" id="GO:0009029">
    <property type="term" value="F:tetraacyldisaccharide 4'-kinase activity"/>
    <property type="evidence" value="ECO:0007669"/>
    <property type="project" value="UniProtKB-UniRule"/>
</dbReference>
<dbReference type="GO" id="GO:0009245">
    <property type="term" value="P:lipid A biosynthetic process"/>
    <property type="evidence" value="ECO:0007669"/>
    <property type="project" value="UniProtKB-UniRule"/>
</dbReference>
<dbReference type="GO" id="GO:0009244">
    <property type="term" value="P:lipopolysaccharide core region biosynthetic process"/>
    <property type="evidence" value="ECO:0007669"/>
    <property type="project" value="TreeGrafter"/>
</dbReference>
<dbReference type="HAMAP" id="MF_00409">
    <property type="entry name" value="LpxK"/>
    <property type="match status" value="1"/>
</dbReference>
<dbReference type="InterPro" id="IPR003758">
    <property type="entry name" value="LpxK"/>
</dbReference>
<dbReference type="InterPro" id="IPR027417">
    <property type="entry name" value="P-loop_NTPase"/>
</dbReference>
<dbReference type="NCBIfam" id="TIGR00682">
    <property type="entry name" value="lpxK"/>
    <property type="match status" value="1"/>
</dbReference>
<dbReference type="PANTHER" id="PTHR42724">
    <property type="entry name" value="TETRAACYLDISACCHARIDE 4'-KINASE"/>
    <property type="match status" value="1"/>
</dbReference>
<dbReference type="PANTHER" id="PTHR42724:SF1">
    <property type="entry name" value="TETRAACYLDISACCHARIDE 4'-KINASE, MITOCHONDRIAL-RELATED"/>
    <property type="match status" value="1"/>
</dbReference>
<dbReference type="Pfam" id="PF02606">
    <property type="entry name" value="LpxK"/>
    <property type="match status" value="1"/>
</dbReference>
<dbReference type="SUPFAM" id="SSF52540">
    <property type="entry name" value="P-loop containing nucleoside triphosphate hydrolases"/>
    <property type="match status" value="1"/>
</dbReference>
<comment type="function">
    <text evidence="1">Transfers the gamma-phosphate of ATP to the 4'-position of a tetraacyldisaccharide 1-phosphate intermediate (termed DS-1-P) to form tetraacyldisaccharide 1,4'-bis-phosphate (lipid IVA).</text>
</comment>
<comment type="catalytic activity">
    <reaction evidence="1">
        <text>a lipid A disaccharide + ATP = a lipid IVA + ADP + H(+)</text>
        <dbReference type="Rhea" id="RHEA:67840"/>
        <dbReference type="ChEBI" id="CHEBI:15378"/>
        <dbReference type="ChEBI" id="CHEBI:30616"/>
        <dbReference type="ChEBI" id="CHEBI:176343"/>
        <dbReference type="ChEBI" id="CHEBI:176425"/>
        <dbReference type="ChEBI" id="CHEBI:456216"/>
        <dbReference type="EC" id="2.7.1.130"/>
    </reaction>
</comment>
<comment type="pathway">
    <text evidence="1">Glycolipid biosynthesis; lipid IV(A) biosynthesis; lipid IV(A) from (3R)-3-hydroxytetradecanoyl-[acyl-carrier-protein] and UDP-N-acetyl-alpha-D-glucosamine: step 6/6.</text>
</comment>
<comment type="similarity">
    <text evidence="1">Belongs to the LpxK family.</text>
</comment>
<accession>Q4FS43</accession>
<gene>
    <name evidence="1" type="primary">lpxK</name>
    <name type="ordered locus">Psyc_1315</name>
</gene>
<evidence type="ECO:0000255" key="1">
    <source>
        <dbReference type="HAMAP-Rule" id="MF_00409"/>
    </source>
</evidence>
<keyword id="KW-0067">ATP-binding</keyword>
<keyword id="KW-0418">Kinase</keyword>
<keyword id="KW-0441">Lipid A biosynthesis</keyword>
<keyword id="KW-0444">Lipid biosynthesis</keyword>
<keyword id="KW-0443">Lipid metabolism</keyword>
<keyword id="KW-0547">Nucleotide-binding</keyword>
<keyword id="KW-1185">Reference proteome</keyword>
<keyword id="KW-0808">Transferase</keyword>
<name>LPXK_PSYA2</name>
<reference key="1">
    <citation type="journal article" date="2010" name="Appl. Environ. Microbiol.">
        <title>The genome sequence of Psychrobacter arcticus 273-4, a psychroactive Siberian permafrost bacterium, reveals mechanisms for adaptation to low-temperature growth.</title>
        <authorList>
            <person name="Ayala-del-Rio H.L."/>
            <person name="Chain P.S."/>
            <person name="Grzymski J.J."/>
            <person name="Ponder M.A."/>
            <person name="Ivanova N."/>
            <person name="Bergholz P.W."/>
            <person name="Di Bartolo G."/>
            <person name="Hauser L."/>
            <person name="Land M."/>
            <person name="Bakermans C."/>
            <person name="Rodrigues D."/>
            <person name="Klappenbach J."/>
            <person name="Zarka D."/>
            <person name="Larimer F."/>
            <person name="Richardson P."/>
            <person name="Murray A."/>
            <person name="Thomashow M."/>
            <person name="Tiedje J.M."/>
        </authorList>
    </citation>
    <scope>NUCLEOTIDE SEQUENCE [LARGE SCALE GENOMIC DNA]</scope>
    <source>
        <strain>DSM 17307 / VKM B-2377 / 273-4</strain>
    </source>
</reference>
<protein>
    <recommendedName>
        <fullName evidence="1">Tetraacyldisaccharide 4'-kinase</fullName>
        <ecNumber evidence="1">2.7.1.130</ecNumber>
    </recommendedName>
    <alternativeName>
        <fullName evidence="1">Lipid A 4'-kinase</fullName>
    </alternativeName>
</protein>